<dbReference type="EMBL" id="BX571857">
    <property type="protein sequence ID" value="CAG42113.1"/>
    <property type="molecule type" value="Genomic_DNA"/>
</dbReference>
<dbReference type="SMR" id="Q6GCA6"/>
<dbReference type="KEGG" id="sas:SAS0342"/>
<dbReference type="HOGENOM" id="CLU_078758_6_2_9"/>
<dbReference type="GO" id="GO:0009295">
    <property type="term" value="C:nucleoid"/>
    <property type="evidence" value="ECO:0007669"/>
    <property type="project" value="TreeGrafter"/>
</dbReference>
<dbReference type="GO" id="GO:0003697">
    <property type="term" value="F:single-stranded DNA binding"/>
    <property type="evidence" value="ECO:0007669"/>
    <property type="project" value="UniProtKB-UniRule"/>
</dbReference>
<dbReference type="GO" id="GO:0006310">
    <property type="term" value="P:DNA recombination"/>
    <property type="evidence" value="ECO:0007669"/>
    <property type="project" value="UniProtKB-UniRule"/>
</dbReference>
<dbReference type="GO" id="GO:0006281">
    <property type="term" value="P:DNA repair"/>
    <property type="evidence" value="ECO:0007669"/>
    <property type="project" value="UniProtKB-UniRule"/>
</dbReference>
<dbReference type="GO" id="GO:0006260">
    <property type="term" value="P:DNA replication"/>
    <property type="evidence" value="ECO:0007669"/>
    <property type="project" value="UniProtKB-UniRule"/>
</dbReference>
<dbReference type="CDD" id="cd04496">
    <property type="entry name" value="SSB_OBF"/>
    <property type="match status" value="1"/>
</dbReference>
<dbReference type="FunFam" id="2.40.50.140:FF:000084">
    <property type="entry name" value="Single-stranded DNA-binding protein"/>
    <property type="match status" value="1"/>
</dbReference>
<dbReference type="Gene3D" id="2.40.50.140">
    <property type="entry name" value="Nucleic acid-binding proteins"/>
    <property type="match status" value="1"/>
</dbReference>
<dbReference type="HAMAP" id="MF_00984">
    <property type="entry name" value="SSB"/>
    <property type="match status" value="1"/>
</dbReference>
<dbReference type="InterPro" id="IPR012340">
    <property type="entry name" value="NA-bd_OB-fold"/>
</dbReference>
<dbReference type="InterPro" id="IPR000424">
    <property type="entry name" value="Primosome_PriB/ssb"/>
</dbReference>
<dbReference type="InterPro" id="IPR011344">
    <property type="entry name" value="ssDNA-bd"/>
</dbReference>
<dbReference type="NCBIfam" id="TIGR00621">
    <property type="entry name" value="ssb"/>
    <property type="match status" value="1"/>
</dbReference>
<dbReference type="PANTHER" id="PTHR10302">
    <property type="entry name" value="SINGLE-STRANDED DNA-BINDING PROTEIN"/>
    <property type="match status" value="1"/>
</dbReference>
<dbReference type="PANTHER" id="PTHR10302:SF27">
    <property type="entry name" value="SINGLE-STRANDED DNA-BINDING PROTEIN"/>
    <property type="match status" value="1"/>
</dbReference>
<dbReference type="Pfam" id="PF00436">
    <property type="entry name" value="SSB"/>
    <property type="match status" value="1"/>
</dbReference>
<dbReference type="PIRSF" id="PIRSF002070">
    <property type="entry name" value="SSB"/>
    <property type="match status" value="1"/>
</dbReference>
<dbReference type="SUPFAM" id="SSF50249">
    <property type="entry name" value="Nucleic acid-binding proteins"/>
    <property type="match status" value="1"/>
</dbReference>
<dbReference type="PROSITE" id="PS50935">
    <property type="entry name" value="SSB"/>
    <property type="match status" value="1"/>
</dbReference>
<feature type="chain" id="PRO_0000096104" description="Single-stranded DNA-binding protein 2">
    <location>
        <begin position="1"/>
        <end position="167"/>
    </location>
</feature>
<feature type="domain" description="SSB" evidence="1">
    <location>
        <begin position="1"/>
        <end position="104"/>
    </location>
</feature>
<feature type="region of interest" description="Disordered" evidence="2">
    <location>
        <begin position="107"/>
        <end position="167"/>
    </location>
</feature>
<feature type="short sequence motif" description="Important for interaction with partner proteins" evidence="1">
    <location>
        <begin position="162"/>
        <end position="167"/>
    </location>
</feature>
<feature type="compositionally biased region" description="Low complexity" evidence="2">
    <location>
        <begin position="109"/>
        <end position="118"/>
    </location>
</feature>
<feature type="compositionally biased region" description="Low complexity" evidence="2">
    <location>
        <begin position="132"/>
        <end position="147"/>
    </location>
</feature>
<accession>Q6GCA6</accession>
<protein>
    <recommendedName>
        <fullName evidence="1">Single-stranded DNA-binding protein 2</fullName>
        <shortName evidence="1">SSB 2</shortName>
    </recommendedName>
</protein>
<comment type="function">
    <text evidence="1">Plays an important role in DNA replication, recombination and repair. Binds to ssDNA and to an array of partner proteins to recruit them to their sites of action during DNA metabolism.</text>
</comment>
<comment type="subunit">
    <text evidence="1">Homotetramer.</text>
</comment>
<proteinExistence type="inferred from homology"/>
<organism>
    <name type="scientific">Staphylococcus aureus (strain MSSA476)</name>
    <dbReference type="NCBI Taxonomy" id="282459"/>
    <lineage>
        <taxon>Bacteria</taxon>
        <taxon>Bacillati</taxon>
        <taxon>Bacillota</taxon>
        <taxon>Bacilli</taxon>
        <taxon>Bacillales</taxon>
        <taxon>Staphylococcaceae</taxon>
        <taxon>Staphylococcus</taxon>
    </lineage>
</organism>
<keyword id="KW-0227">DNA damage</keyword>
<keyword id="KW-0233">DNA recombination</keyword>
<keyword id="KW-0234">DNA repair</keyword>
<keyword id="KW-0235">DNA replication</keyword>
<keyword id="KW-0238">DNA-binding</keyword>
<sequence>MLNRVVLVGRLTKDPEYRTTPSGVSVATFTLAVNRTFTNAQGEREADFINCVVFRRQADNVNNYLSKGSLAGVDGRLQSRNYENQEGRRVFVTEVVCDSVQFLEPKNAQQNGGQRQQNEFQDYGQGFGGQQSGQNNSYNNSSNTKQSDNPFANANGPIDISDDDLPF</sequence>
<gene>
    <name type="primary">ssb2</name>
    <name type="ordered locus">SAS0342</name>
</gene>
<evidence type="ECO:0000255" key="1">
    <source>
        <dbReference type="HAMAP-Rule" id="MF_00984"/>
    </source>
</evidence>
<evidence type="ECO:0000256" key="2">
    <source>
        <dbReference type="SAM" id="MobiDB-lite"/>
    </source>
</evidence>
<reference key="1">
    <citation type="journal article" date="2004" name="Proc. Natl. Acad. Sci. U.S.A.">
        <title>Complete genomes of two clinical Staphylococcus aureus strains: evidence for the rapid evolution of virulence and drug resistance.</title>
        <authorList>
            <person name="Holden M.T.G."/>
            <person name="Feil E.J."/>
            <person name="Lindsay J.A."/>
            <person name="Peacock S.J."/>
            <person name="Day N.P.J."/>
            <person name="Enright M.C."/>
            <person name="Foster T.J."/>
            <person name="Moore C.E."/>
            <person name="Hurst L."/>
            <person name="Atkin R."/>
            <person name="Barron A."/>
            <person name="Bason N."/>
            <person name="Bentley S.D."/>
            <person name="Chillingworth C."/>
            <person name="Chillingworth T."/>
            <person name="Churcher C."/>
            <person name="Clark L."/>
            <person name="Corton C."/>
            <person name="Cronin A."/>
            <person name="Doggett J."/>
            <person name="Dowd L."/>
            <person name="Feltwell T."/>
            <person name="Hance Z."/>
            <person name="Harris B."/>
            <person name="Hauser H."/>
            <person name="Holroyd S."/>
            <person name="Jagels K."/>
            <person name="James K.D."/>
            <person name="Lennard N."/>
            <person name="Line A."/>
            <person name="Mayes R."/>
            <person name="Moule S."/>
            <person name="Mungall K."/>
            <person name="Ormond D."/>
            <person name="Quail M.A."/>
            <person name="Rabbinowitsch E."/>
            <person name="Rutherford K.M."/>
            <person name="Sanders M."/>
            <person name="Sharp S."/>
            <person name="Simmonds M."/>
            <person name="Stevens K."/>
            <person name="Whitehead S."/>
            <person name="Barrell B.G."/>
            <person name="Spratt B.G."/>
            <person name="Parkhill J."/>
        </authorList>
    </citation>
    <scope>NUCLEOTIDE SEQUENCE [LARGE SCALE GENOMIC DNA]</scope>
    <source>
        <strain>MSSA476</strain>
    </source>
</reference>
<name>SSB2_STAAS</name>